<reference key="1">
    <citation type="journal article" date="1999" name="Mol. Biochem. Parasitol.">
        <title>Molecular cloning and characterization of the polypeptide backbone of Schistosoma mansoni circulating cathodic antigen.</title>
        <authorList>
            <person name="Abdeen H.H."/>
            <person name="Attallah A.F."/>
            <person name="Mansour M.M."/>
            <person name="Harrison R.A."/>
        </authorList>
    </citation>
    <scope>NUCLEOTIDE SEQUENCE [MRNA]</scope>
    <source>
        <strain>Egyptian</strain>
    </source>
</reference>
<reference key="2">
    <citation type="journal article" date="1994" name="Eur. J. Biochem.">
        <title>The immunologically reactive O-linked polysaccharide chains derived from circulating cathodic antigen isolated from the human blood fluke Schistosoma mansoni have Lewis x as repeating unit.</title>
        <authorList>
            <person name="Van Dam G.J."/>
            <person name="Bergwerff A.A."/>
            <person name="Thomas-Oates J.E."/>
            <person name="Rotmans J.P."/>
            <person name="Kamerling J.P."/>
            <person name="Vliegenthart J.F.G."/>
            <person name="Deelder A.M."/>
        </authorList>
    </citation>
    <scope>GLYCOSYLATION</scope>
    <scope>STRUCTURE OF CARBOHYDRATES</scope>
    <source>
        <strain>Puerto Rican</strain>
    </source>
</reference>
<proteinExistence type="evidence at protein level"/>
<protein>
    <recommendedName>
        <fullName>Circulating cathodic antigen</fullName>
        <shortName>CCA</shortName>
    </recommendedName>
</protein>
<accession>O02197</accession>
<keyword id="KW-0175">Coiled coil</keyword>
<keyword id="KW-0325">Glycoprotein</keyword>
<keyword id="KW-1185">Reference proteome</keyword>
<evidence type="ECO:0000255" key="1"/>
<evidence type="ECO:0000256" key="2">
    <source>
        <dbReference type="SAM" id="MobiDB-lite"/>
    </source>
</evidence>
<evidence type="ECO:0000269" key="3">
    <source>
    </source>
</evidence>
<evidence type="ECO:0000305" key="4"/>
<comment type="function">
    <text>Involved in protection of the schistosome gut.</text>
</comment>
<comment type="PTM">
    <text evidence="3">O-glycosylated.</text>
</comment>
<comment type="similarity">
    <text evidence="4">Belongs to the SIKE family.</text>
</comment>
<dbReference type="EMBL" id="U94619">
    <property type="protein sequence ID" value="AAB53003.1"/>
    <property type="molecule type" value="mRNA"/>
</dbReference>
<dbReference type="SMR" id="O02197"/>
<dbReference type="STRING" id="6183.O02197"/>
<dbReference type="GlyConnect" id="95">
    <property type="glycosylation" value="6 O-Linked glycans"/>
</dbReference>
<dbReference type="ABCD" id="O02197">
    <property type="antibodies" value="1 sequenced antibody"/>
</dbReference>
<dbReference type="eggNOG" id="ENOG502QSAD">
    <property type="taxonomic scope" value="Eukaryota"/>
</dbReference>
<dbReference type="HOGENOM" id="CLU_812144_0_0_1"/>
<dbReference type="InParanoid" id="O02197"/>
<dbReference type="Proteomes" id="UP000008854">
    <property type="component" value="Unassembled WGS sequence"/>
</dbReference>
<dbReference type="InterPro" id="IPR008555">
    <property type="entry name" value="SIKE"/>
</dbReference>
<dbReference type="PANTHER" id="PTHR12186:SF2">
    <property type="entry name" value="FGFR1 ONCOGENE PARTNER 2 HOMOLOG"/>
    <property type="match status" value="1"/>
</dbReference>
<dbReference type="PANTHER" id="PTHR12186">
    <property type="entry name" value="SIKE FAMILY MEMBER"/>
    <property type="match status" value="1"/>
</dbReference>
<dbReference type="Pfam" id="PF05769">
    <property type="entry name" value="SIKE"/>
    <property type="match status" value="1"/>
</dbReference>
<name>CCA_SCHMA</name>
<sequence>MTFDFMLKYSFDKVMDDVQLLVSRLRAREESVDILRQQLCKLQAQLLSMRQCQETILEFDEFSKRVSNQPKGPLIICLAAENKQLEQLKIENKTLRNSLDEHQTALDMIMTKYRGQISKLMRTYQVEHLVQSVINPDNNENRCIKSFYPGPKSVNTPSTNSIDSQSVSQKSNSGKVDEITDGISQSLTEQFTTVASIVRDVTDRGDAYATELEEELHRLRSENAGLREILMISSDCCPDTNSNDCVLPPVSLPNKDSIQHESSSLSSIQSGRFHFLDEDSSSIHLPGIDECLSSVNVNEDSFLYNIPNPSDDSSNSGTISGNHSDEDSDEDDNTVYEVAMNQMINSL</sequence>
<organism>
    <name type="scientific">Schistosoma mansoni</name>
    <name type="common">Blood fluke</name>
    <dbReference type="NCBI Taxonomy" id="6183"/>
    <lineage>
        <taxon>Eukaryota</taxon>
        <taxon>Metazoa</taxon>
        <taxon>Spiralia</taxon>
        <taxon>Lophotrochozoa</taxon>
        <taxon>Platyhelminthes</taxon>
        <taxon>Trematoda</taxon>
        <taxon>Digenea</taxon>
        <taxon>Strigeidida</taxon>
        <taxon>Schistosomatoidea</taxon>
        <taxon>Schistosomatidae</taxon>
        <taxon>Schistosoma</taxon>
    </lineage>
</organism>
<feature type="chain" id="PRO_0000089393" description="Circulating cathodic antigen">
    <location>
        <begin position="1"/>
        <end position="347"/>
    </location>
</feature>
<feature type="region of interest" description="Disordered" evidence="2">
    <location>
        <begin position="149"/>
        <end position="177"/>
    </location>
</feature>
<feature type="region of interest" description="Disordered" evidence="2">
    <location>
        <begin position="303"/>
        <end position="332"/>
    </location>
</feature>
<feature type="coiled-coil region" evidence="1">
    <location>
        <begin position="76"/>
        <end position="109"/>
    </location>
</feature>
<feature type="coiled-coil region" evidence="1">
    <location>
        <begin position="206"/>
        <end position="233"/>
    </location>
</feature>
<feature type="compositionally biased region" description="Polar residues" evidence="2">
    <location>
        <begin position="153"/>
        <end position="174"/>
    </location>
</feature>
<feature type="compositionally biased region" description="Low complexity" evidence="2">
    <location>
        <begin position="307"/>
        <end position="316"/>
    </location>
</feature>